<evidence type="ECO:0000250" key="1"/>
<evidence type="ECO:0000250" key="2">
    <source>
        <dbReference type="UniProtKB" id="P68363"/>
    </source>
</evidence>
<evidence type="ECO:0000250" key="3">
    <source>
        <dbReference type="UniProtKB" id="Q13509"/>
    </source>
</evidence>
<evidence type="ECO:0000256" key="4">
    <source>
        <dbReference type="SAM" id="MobiDB-lite"/>
    </source>
</evidence>
<evidence type="ECO:0000269" key="5">
    <source>
    </source>
</evidence>
<evidence type="ECO:0000269" key="6">
    <source>
    </source>
</evidence>
<evidence type="ECO:0000269" key="7">
    <source>
    </source>
</evidence>
<evidence type="ECO:0000305" key="8"/>
<evidence type="ECO:0007829" key="9">
    <source>
        <dbReference type="PDB" id="6TIZ"/>
    </source>
</evidence>
<evidence type="ECO:0007829" key="10">
    <source>
        <dbReference type="PDB" id="7QUC"/>
    </source>
</evidence>
<comment type="function">
    <text>Tubulin is the major constituent of microtubules, a cylinder consisting of laterally associated linear protofilaments composed of alpha- and beta-tubulin heterodimers. Microtubules grow by the addition of GTP-tubulin dimers to the microtubule end, where a stabilizing cap forms. Below the cap, tubulin dimers are in GDP-bound state, owing to GTPase activity of alpha-tubulin.</text>
</comment>
<comment type="cofactor">
    <cofactor evidence="2">
        <name>Mg(2+)</name>
        <dbReference type="ChEBI" id="CHEBI:18420"/>
    </cofactor>
</comment>
<comment type="subunit">
    <text evidence="6">Dimer of alpha and beta chains. A typical microtubule is a hollow water-filled tube with an outer diameter of 25 nm and an inner diameter of 15 nM. Alpha-beta heterodimers associate head-to-tail to form protofilaments running lengthwise along the microtubule wall with the beta-tubulin subunit facing the microtubule plus end conferring a structural polarity. Microtubules usually have 13 protofilaments but different protofilament numbers can be found in some organisms and specialized cells. Interacts with mgr and Vhl.</text>
</comment>
<comment type="subcellular location">
    <subcellularLocation>
        <location evidence="1">Cytoplasm</location>
        <location evidence="1">Cytoskeleton</location>
    </subcellularLocation>
</comment>
<comment type="disruption phenotype">
    <text evidence="7">RNAi-mediated knockdown eliminates microtubules in fat body cells, resulting in defective nuclear positioning.</text>
</comment>
<comment type="similarity">
    <text evidence="8">Belongs to the tubulin family.</text>
</comment>
<proteinExistence type="evidence at protein level"/>
<accession>Q24560</accession>
<accession>Q53YG6</accession>
<accession>Q9V8V4</accession>
<organism>
    <name type="scientific">Drosophila melanogaster</name>
    <name type="common">Fruit fly</name>
    <dbReference type="NCBI Taxonomy" id="7227"/>
    <lineage>
        <taxon>Eukaryota</taxon>
        <taxon>Metazoa</taxon>
        <taxon>Ecdysozoa</taxon>
        <taxon>Arthropoda</taxon>
        <taxon>Hexapoda</taxon>
        <taxon>Insecta</taxon>
        <taxon>Pterygota</taxon>
        <taxon>Neoptera</taxon>
        <taxon>Endopterygota</taxon>
        <taxon>Diptera</taxon>
        <taxon>Brachycera</taxon>
        <taxon>Muscomorpha</taxon>
        <taxon>Ephydroidea</taxon>
        <taxon>Drosophilidae</taxon>
        <taxon>Drosophila</taxon>
        <taxon>Sophophora</taxon>
    </lineage>
</organism>
<sequence>MREIVHIQAGQCGNQIGAKFWEIISDEHGIDATGAYHGDSDLQLERINVYYNEASGGKYVPRAVLVDLEPGTMDSVRSGPFGQIFRPDNFVFGQSGAGNNWAKGHYTEGAELVDSVLDVVRKEAESCDCLQGFQLTHSLGGGTGSGMGTLLISKIREEYPDRIMNTYSVVPSPKVSDTVVEPYNATLSVHQLVENTDETYCIDNEALYDICFRTLKLTTPTYGDLNHLVSLTMSGVTTCLRFPGQLNADLRKLAVNMVPFPRLHFFMPGFAPLTSRGSQQYRALTVPELTQQMFDAKNMMAACDPRHGRYLTVAAIFRGRMSMKEVDEQMLNIQNKNSSYFVEWIPNNVKTAVCDIPPRGLKMSATFIGNSTAIQELFKRISEQFTAMFRRKAFLHWYTGEGMDEMEFTEAESNMNDLVSEYQQYQEATADEDAEFEEEQEAEVDEN</sequence>
<keyword id="KW-0002">3D-structure</keyword>
<keyword id="KW-0963">Cytoplasm</keyword>
<keyword id="KW-0206">Cytoskeleton</keyword>
<keyword id="KW-0342">GTP-binding</keyword>
<keyword id="KW-0460">Magnesium</keyword>
<keyword id="KW-0479">Metal-binding</keyword>
<keyword id="KW-0493">Microtubule</keyword>
<keyword id="KW-0547">Nucleotide-binding</keyword>
<keyword id="KW-0597">Phosphoprotein</keyword>
<keyword id="KW-1185">Reference proteome</keyword>
<gene>
    <name type="primary">betaTub56D</name>
    <name type="ORF">CG9277</name>
</gene>
<protein>
    <recommendedName>
        <fullName>Tubulin beta-1 chain</fullName>
    </recommendedName>
    <alternativeName>
        <fullName>Beta-1-tubulin</fullName>
    </alternativeName>
</protein>
<feature type="chain" id="PRO_0000048276" description="Tubulin beta-1 chain">
    <location>
        <begin position="1"/>
        <end position="447"/>
    </location>
</feature>
<feature type="region of interest" description="Disordered" evidence="4">
    <location>
        <begin position="427"/>
        <end position="447"/>
    </location>
</feature>
<feature type="compositionally biased region" description="Acidic residues" evidence="4">
    <location>
        <begin position="429"/>
        <end position="447"/>
    </location>
</feature>
<feature type="binding site" evidence="3">
    <location>
        <position position="11"/>
    </location>
    <ligand>
        <name>GTP</name>
        <dbReference type="ChEBI" id="CHEBI:37565"/>
    </ligand>
</feature>
<feature type="binding site" evidence="2">
    <location>
        <position position="69"/>
    </location>
    <ligand>
        <name>GTP</name>
        <dbReference type="ChEBI" id="CHEBI:37565"/>
    </ligand>
</feature>
<feature type="binding site" evidence="2">
    <location>
        <position position="69"/>
    </location>
    <ligand>
        <name>Mg(2+)</name>
        <dbReference type="ChEBI" id="CHEBI:18420"/>
    </ligand>
</feature>
<feature type="binding site" evidence="3">
    <location>
        <position position="138"/>
    </location>
    <ligand>
        <name>GTP</name>
        <dbReference type="ChEBI" id="CHEBI:37565"/>
    </ligand>
</feature>
<feature type="binding site" evidence="3">
    <location>
        <position position="142"/>
    </location>
    <ligand>
        <name>GTP</name>
        <dbReference type="ChEBI" id="CHEBI:37565"/>
    </ligand>
</feature>
<feature type="binding site" evidence="3">
    <location>
        <position position="143"/>
    </location>
    <ligand>
        <name>GTP</name>
        <dbReference type="ChEBI" id="CHEBI:37565"/>
    </ligand>
</feature>
<feature type="binding site" evidence="3">
    <location>
        <position position="144"/>
    </location>
    <ligand>
        <name>GTP</name>
        <dbReference type="ChEBI" id="CHEBI:37565"/>
    </ligand>
</feature>
<feature type="binding site" evidence="3">
    <location>
        <position position="204"/>
    </location>
    <ligand>
        <name>GTP</name>
        <dbReference type="ChEBI" id="CHEBI:37565"/>
    </ligand>
</feature>
<feature type="binding site" evidence="3">
    <location>
        <position position="226"/>
    </location>
    <ligand>
        <name>GTP</name>
        <dbReference type="ChEBI" id="CHEBI:37565"/>
    </ligand>
</feature>
<feature type="modified residue" description="Phosphoserine" evidence="5">
    <location>
        <position position="40"/>
    </location>
</feature>
<feature type="modified residue" description="Phosphoserine" evidence="5">
    <location>
        <position position="339"/>
    </location>
</feature>
<feature type="sequence conflict" description="In Ref. 1; AAA28989." evidence="8" ref="1">
    <original>A</original>
    <variation>T</variation>
    <location>
        <position position="35"/>
    </location>
</feature>
<feature type="sequence conflict" description="In Ref. 1; AAA28989." evidence="8" ref="1">
    <original>I</original>
    <variation>S</variation>
    <location>
        <position position="163"/>
    </location>
</feature>
<feature type="strand" evidence="9">
    <location>
        <begin position="3"/>
        <end position="9"/>
    </location>
</feature>
<feature type="helix" evidence="9">
    <location>
        <begin position="10"/>
        <end position="27"/>
    </location>
</feature>
<feature type="strand" evidence="9">
    <location>
        <begin position="34"/>
        <end position="36"/>
    </location>
</feature>
<feature type="helix" evidence="9">
    <location>
        <begin position="42"/>
        <end position="45"/>
    </location>
</feature>
<feature type="helix" evidence="9">
    <location>
        <begin position="47"/>
        <end position="49"/>
    </location>
</feature>
<feature type="strand" evidence="9">
    <location>
        <begin position="51"/>
        <end position="53"/>
    </location>
</feature>
<feature type="strand" evidence="9">
    <location>
        <begin position="55"/>
        <end position="61"/>
    </location>
</feature>
<feature type="strand" evidence="9">
    <location>
        <begin position="63"/>
        <end position="69"/>
    </location>
</feature>
<feature type="helix" evidence="9">
    <location>
        <begin position="70"/>
        <end position="78"/>
    </location>
</feature>
<feature type="helix" evidence="9">
    <location>
        <begin position="82"/>
        <end position="84"/>
    </location>
</feature>
<feature type="helix" evidence="9">
    <location>
        <begin position="87"/>
        <end position="89"/>
    </location>
</feature>
<feature type="strand" evidence="9">
    <location>
        <begin position="90"/>
        <end position="92"/>
    </location>
</feature>
<feature type="helix" evidence="9">
    <location>
        <begin position="101"/>
        <end position="106"/>
    </location>
</feature>
<feature type="helix" evidence="9">
    <location>
        <begin position="108"/>
        <end position="125"/>
    </location>
</feature>
<feature type="strand" evidence="9">
    <location>
        <begin position="128"/>
        <end position="142"/>
    </location>
</feature>
<feature type="helix" evidence="9">
    <location>
        <begin position="143"/>
        <end position="158"/>
    </location>
</feature>
<feature type="strand" evidence="9">
    <location>
        <begin position="162"/>
        <end position="170"/>
    </location>
</feature>
<feature type="helix" evidence="9">
    <location>
        <begin position="173"/>
        <end position="175"/>
    </location>
</feature>
<feature type="helix" evidence="9">
    <location>
        <begin position="181"/>
        <end position="195"/>
    </location>
</feature>
<feature type="strand" evidence="9">
    <location>
        <begin position="197"/>
        <end position="203"/>
    </location>
</feature>
<feature type="helix" evidence="9">
    <location>
        <begin position="204"/>
        <end position="213"/>
    </location>
</feature>
<feature type="helix" evidence="9">
    <location>
        <begin position="222"/>
        <end position="241"/>
    </location>
</feature>
<feature type="strand" evidence="9">
    <location>
        <begin position="245"/>
        <end position="247"/>
    </location>
</feature>
<feature type="helix" evidence="9">
    <location>
        <begin position="250"/>
        <end position="257"/>
    </location>
</feature>
<feature type="strand" evidence="10">
    <location>
        <begin position="259"/>
        <end position="262"/>
    </location>
</feature>
<feature type="strand" evidence="9">
    <location>
        <begin position="265"/>
        <end position="272"/>
    </location>
</feature>
<feature type="helix" evidence="9">
    <location>
        <begin position="286"/>
        <end position="291"/>
    </location>
</feature>
<feature type="helix" evidence="9">
    <location>
        <begin position="292"/>
        <end position="294"/>
    </location>
</feature>
<feature type="helix" evidence="9">
    <location>
        <begin position="296"/>
        <end position="298"/>
    </location>
</feature>
<feature type="strand" evidence="9">
    <location>
        <begin position="299"/>
        <end position="302"/>
    </location>
</feature>
<feature type="helix" evidence="9">
    <location>
        <begin position="305"/>
        <end position="307"/>
    </location>
</feature>
<feature type="strand" evidence="9">
    <location>
        <begin position="310"/>
        <end position="320"/>
    </location>
</feature>
<feature type="helix" evidence="9">
    <location>
        <begin position="323"/>
        <end position="336"/>
    </location>
</feature>
<feature type="helix" evidence="9">
    <location>
        <begin position="337"/>
        <end position="340"/>
    </location>
</feature>
<feature type="strand" evidence="9">
    <location>
        <begin position="349"/>
        <end position="356"/>
    </location>
</feature>
<feature type="strand" evidence="9">
    <location>
        <begin position="362"/>
        <end position="371"/>
    </location>
</feature>
<feature type="helix" evidence="9">
    <location>
        <begin position="372"/>
        <end position="374"/>
    </location>
</feature>
<feature type="helix" evidence="9">
    <location>
        <begin position="375"/>
        <end position="389"/>
    </location>
</feature>
<feature type="turn" evidence="9">
    <location>
        <begin position="390"/>
        <end position="395"/>
    </location>
</feature>
<feature type="helix" evidence="9">
    <location>
        <begin position="396"/>
        <end position="399"/>
    </location>
</feature>
<feature type="turn" evidence="9">
    <location>
        <begin position="400"/>
        <end position="402"/>
    </location>
</feature>
<feature type="helix" evidence="9">
    <location>
        <begin position="405"/>
        <end position="427"/>
    </location>
</feature>
<reference key="1">
    <citation type="journal article" date="1987" name="Chromosoma">
        <title>Testis-specific beta 2 tubulins are identical in Drosophila melanogaster and D. hydei but differ from the ubiquitous beta 1 tubulin.</title>
        <authorList>
            <person name="Michiels F."/>
            <person name="Falkenburg D."/>
            <person name="Mueller A.M."/>
            <person name="Hinz U."/>
            <person name="Otto U."/>
            <person name="Bellmann R."/>
            <person name="Glaetzer K.H."/>
            <person name="Brand R."/>
            <person name="Bialojan S."/>
            <person name="Renkawitz-Pohl R."/>
        </authorList>
    </citation>
    <scope>NUCLEOTIDE SEQUENCE [MRNA]</scope>
</reference>
<reference key="2">
    <citation type="journal article" date="2000" name="Science">
        <title>The genome sequence of Drosophila melanogaster.</title>
        <authorList>
            <person name="Adams M.D."/>
            <person name="Celniker S.E."/>
            <person name="Holt R.A."/>
            <person name="Evans C.A."/>
            <person name="Gocayne J.D."/>
            <person name="Amanatides P.G."/>
            <person name="Scherer S.E."/>
            <person name="Li P.W."/>
            <person name="Hoskins R.A."/>
            <person name="Galle R.F."/>
            <person name="George R.A."/>
            <person name="Lewis S.E."/>
            <person name="Richards S."/>
            <person name="Ashburner M."/>
            <person name="Henderson S.N."/>
            <person name="Sutton G.G."/>
            <person name="Wortman J.R."/>
            <person name="Yandell M.D."/>
            <person name="Zhang Q."/>
            <person name="Chen L.X."/>
            <person name="Brandon R.C."/>
            <person name="Rogers Y.-H.C."/>
            <person name="Blazej R.G."/>
            <person name="Champe M."/>
            <person name="Pfeiffer B.D."/>
            <person name="Wan K.H."/>
            <person name="Doyle C."/>
            <person name="Baxter E.G."/>
            <person name="Helt G."/>
            <person name="Nelson C.R."/>
            <person name="Miklos G.L.G."/>
            <person name="Abril J.F."/>
            <person name="Agbayani A."/>
            <person name="An H.-J."/>
            <person name="Andrews-Pfannkoch C."/>
            <person name="Baldwin D."/>
            <person name="Ballew R.M."/>
            <person name="Basu A."/>
            <person name="Baxendale J."/>
            <person name="Bayraktaroglu L."/>
            <person name="Beasley E.M."/>
            <person name="Beeson K.Y."/>
            <person name="Benos P.V."/>
            <person name="Berman B.P."/>
            <person name="Bhandari D."/>
            <person name="Bolshakov S."/>
            <person name="Borkova D."/>
            <person name="Botchan M.R."/>
            <person name="Bouck J."/>
            <person name="Brokstein P."/>
            <person name="Brottier P."/>
            <person name="Burtis K.C."/>
            <person name="Busam D.A."/>
            <person name="Butler H."/>
            <person name="Cadieu E."/>
            <person name="Center A."/>
            <person name="Chandra I."/>
            <person name="Cherry J.M."/>
            <person name="Cawley S."/>
            <person name="Dahlke C."/>
            <person name="Davenport L.B."/>
            <person name="Davies P."/>
            <person name="de Pablos B."/>
            <person name="Delcher A."/>
            <person name="Deng Z."/>
            <person name="Mays A.D."/>
            <person name="Dew I."/>
            <person name="Dietz S.M."/>
            <person name="Dodson K."/>
            <person name="Doup L.E."/>
            <person name="Downes M."/>
            <person name="Dugan-Rocha S."/>
            <person name="Dunkov B.C."/>
            <person name="Dunn P."/>
            <person name="Durbin K.J."/>
            <person name="Evangelista C.C."/>
            <person name="Ferraz C."/>
            <person name="Ferriera S."/>
            <person name="Fleischmann W."/>
            <person name="Fosler C."/>
            <person name="Gabrielian A.E."/>
            <person name="Garg N.S."/>
            <person name="Gelbart W.M."/>
            <person name="Glasser K."/>
            <person name="Glodek A."/>
            <person name="Gong F."/>
            <person name="Gorrell J.H."/>
            <person name="Gu Z."/>
            <person name="Guan P."/>
            <person name="Harris M."/>
            <person name="Harris N.L."/>
            <person name="Harvey D.A."/>
            <person name="Heiman T.J."/>
            <person name="Hernandez J.R."/>
            <person name="Houck J."/>
            <person name="Hostin D."/>
            <person name="Houston K.A."/>
            <person name="Howland T.J."/>
            <person name="Wei M.-H."/>
            <person name="Ibegwam C."/>
            <person name="Jalali M."/>
            <person name="Kalush F."/>
            <person name="Karpen G.H."/>
            <person name="Ke Z."/>
            <person name="Kennison J.A."/>
            <person name="Ketchum K.A."/>
            <person name="Kimmel B.E."/>
            <person name="Kodira C.D."/>
            <person name="Kraft C.L."/>
            <person name="Kravitz S."/>
            <person name="Kulp D."/>
            <person name="Lai Z."/>
            <person name="Lasko P."/>
            <person name="Lei Y."/>
            <person name="Levitsky A.A."/>
            <person name="Li J.H."/>
            <person name="Li Z."/>
            <person name="Liang Y."/>
            <person name="Lin X."/>
            <person name="Liu X."/>
            <person name="Mattei B."/>
            <person name="McIntosh T.C."/>
            <person name="McLeod M.P."/>
            <person name="McPherson D."/>
            <person name="Merkulov G."/>
            <person name="Milshina N.V."/>
            <person name="Mobarry C."/>
            <person name="Morris J."/>
            <person name="Moshrefi A."/>
            <person name="Mount S.M."/>
            <person name="Moy M."/>
            <person name="Murphy B."/>
            <person name="Murphy L."/>
            <person name="Muzny D.M."/>
            <person name="Nelson D.L."/>
            <person name="Nelson D.R."/>
            <person name="Nelson K.A."/>
            <person name="Nixon K."/>
            <person name="Nusskern D.R."/>
            <person name="Pacleb J.M."/>
            <person name="Palazzolo M."/>
            <person name="Pittman G.S."/>
            <person name="Pan S."/>
            <person name="Pollard J."/>
            <person name="Puri V."/>
            <person name="Reese M.G."/>
            <person name="Reinert K."/>
            <person name="Remington K."/>
            <person name="Saunders R.D.C."/>
            <person name="Scheeler F."/>
            <person name="Shen H."/>
            <person name="Shue B.C."/>
            <person name="Siden-Kiamos I."/>
            <person name="Simpson M."/>
            <person name="Skupski M.P."/>
            <person name="Smith T.J."/>
            <person name="Spier E."/>
            <person name="Spradling A.C."/>
            <person name="Stapleton M."/>
            <person name="Strong R."/>
            <person name="Sun E."/>
            <person name="Svirskas R."/>
            <person name="Tector C."/>
            <person name="Turner R."/>
            <person name="Venter E."/>
            <person name="Wang A.H."/>
            <person name="Wang X."/>
            <person name="Wang Z.-Y."/>
            <person name="Wassarman D.A."/>
            <person name="Weinstock G.M."/>
            <person name="Weissenbach J."/>
            <person name="Williams S.M."/>
            <person name="Woodage T."/>
            <person name="Worley K.C."/>
            <person name="Wu D."/>
            <person name="Yang S."/>
            <person name="Yao Q.A."/>
            <person name="Ye J."/>
            <person name="Yeh R.-F."/>
            <person name="Zaveri J.S."/>
            <person name="Zhan M."/>
            <person name="Zhang G."/>
            <person name="Zhao Q."/>
            <person name="Zheng L."/>
            <person name="Zheng X.H."/>
            <person name="Zhong F.N."/>
            <person name="Zhong W."/>
            <person name="Zhou X."/>
            <person name="Zhu S.C."/>
            <person name="Zhu X."/>
            <person name="Smith H.O."/>
            <person name="Gibbs R.A."/>
            <person name="Myers E.W."/>
            <person name="Rubin G.M."/>
            <person name="Venter J.C."/>
        </authorList>
    </citation>
    <scope>NUCLEOTIDE SEQUENCE [LARGE SCALE GENOMIC DNA]</scope>
    <source>
        <strain>Berkeley</strain>
    </source>
</reference>
<reference key="3">
    <citation type="journal article" date="2002" name="Genome Biol.">
        <title>Annotation of the Drosophila melanogaster euchromatic genome: a systematic review.</title>
        <authorList>
            <person name="Misra S."/>
            <person name="Crosby M.A."/>
            <person name="Mungall C.J."/>
            <person name="Matthews B.B."/>
            <person name="Campbell K.S."/>
            <person name="Hradecky P."/>
            <person name="Huang Y."/>
            <person name="Kaminker J.S."/>
            <person name="Millburn G.H."/>
            <person name="Prochnik S.E."/>
            <person name="Smith C.D."/>
            <person name="Tupy J.L."/>
            <person name="Whitfield E.J."/>
            <person name="Bayraktaroglu L."/>
            <person name="Berman B.P."/>
            <person name="Bettencourt B.R."/>
            <person name="Celniker S.E."/>
            <person name="de Grey A.D.N.J."/>
            <person name="Drysdale R.A."/>
            <person name="Harris N.L."/>
            <person name="Richter J."/>
            <person name="Russo S."/>
            <person name="Schroeder A.J."/>
            <person name="Shu S.Q."/>
            <person name="Stapleton M."/>
            <person name="Yamada C."/>
            <person name="Ashburner M."/>
            <person name="Gelbart W.M."/>
            <person name="Rubin G.M."/>
            <person name="Lewis S.E."/>
        </authorList>
    </citation>
    <scope>GENOME REANNOTATION</scope>
    <source>
        <strain>Berkeley</strain>
    </source>
</reference>
<reference key="4">
    <citation type="submission" date="2003-01" db="EMBL/GenBank/DDBJ databases">
        <authorList>
            <person name="Stapleton M."/>
            <person name="Brokstein P."/>
            <person name="Hong L."/>
            <person name="Agbayani A."/>
            <person name="Carlson J.W."/>
            <person name="Champe M."/>
            <person name="Chavez C."/>
            <person name="Dorsett V."/>
            <person name="Dresnek D."/>
            <person name="Farfan D."/>
            <person name="Frise E."/>
            <person name="George R.A."/>
            <person name="Gonzalez M."/>
            <person name="Guarin H."/>
            <person name="Kronmiller B."/>
            <person name="Li P.W."/>
            <person name="Liao G."/>
            <person name="Miranda A."/>
            <person name="Mungall C.J."/>
            <person name="Nunoo J."/>
            <person name="Pacleb J.M."/>
            <person name="Paragas V."/>
            <person name="Park S."/>
            <person name="Patel S."/>
            <person name="Phouanenavong S."/>
            <person name="Wan K.H."/>
            <person name="Yu C."/>
            <person name="Lewis S.E."/>
            <person name="Rubin G.M."/>
            <person name="Celniker S.E."/>
        </authorList>
    </citation>
    <scope>NUCLEOTIDE SEQUENCE [LARGE SCALE MRNA]</scope>
    <source>
        <strain>Berkeley</strain>
        <tissue>Embryo</tissue>
    </source>
</reference>
<reference key="5">
    <citation type="journal article" date="2008" name="J. Proteome Res.">
        <title>Phosphoproteome analysis of Drosophila melanogaster embryos.</title>
        <authorList>
            <person name="Zhai B."/>
            <person name="Villen J."/>
            <person name="Beausoleil S.A."/>
            <person name="Mintseris J."/>
            <person name="Gygi S.P."/>
        </authorList>
    </citation>
    <scope>PHOSPHORYLATION [LARGE SCALE ANALYSIS] AT SER-40 AND SER-339</scope>
    <scope>IDENTIFICATION BY MASS SPECTROMETRY</scope>
    <source>
        <tissue>Embryo</tissue>
    </source>
</reference>
<reference key="6">
    <citation type="journal article" date="2012" name="Proc. Natl. Acad. Sci. U.S.A.">
        <title>Drosophila Mgr, a Prefoldin subunit cooperating with von Hippel Lindau to regulate tubulin stability.</title>
        <authorList>
            <person name="Delgehyr N."/>
            <person name="Wieland U."/>
            <person name="Rangone H."/>
            <person name="Pinson X."/>
            <person name="Mao G."/>
            <person name="Dzhindzhev N.S."/>
            <person name="McLean D."/>
            <person name="Riparbelli M.G."/>
            <person name="Llamazares S."/>
            <person name="Callaini G."/>
            <person name="Gonzalez C."/>
            <person name="Glover D.M."/>
        </authorList>
    </citation>
    <scope>INTERACTION WITH MGR AND VHL</scope>
</reference>
<reference key="7">
    <citation type="journal article" date="2020" name="Nat. Cell Biol.">
        <title>A perinuclear microtubule-organizing centre controls nuclear positioning and basement membrane secretion.</title>
        <authorList>
            <person name="Zheng Y."/>
            <person name="Buchwalter R.A."/>
            <person name="Zheng C."/>
            <person name="Wight E.M."/>
            <person name="Chen J.V."/>
            <person name="Megraw T.L."/>
        </authorList>
    </citation>
    <scope>DISRUPTION PHENOTYPE</scope>
</reference>
<name>TBB1_DROME</name>
<dbReference type="EMBL" id="M20419">
    <property type="protein sequence ID" value="AAA28989.1"/>
    <property type="molecule type" value="mRNA"/>
</dbReference>
<dbReference type="EMBL" id="AE013599">
    <property type="protein sequence ID" value="AAF57555.1"/>
    <property type="molecule type" value="Genomic_DNA"/>
</dbReference>
<dbReference type="EMBL" id="BT003242">
    <property type="protein sequence ID" value="AAO24999.1"/>
    <property type="molecule type" value="mRNA"/>
</dbReference>
<dbReference type="RefSeq" id="NP_523795.2">
    <property type="nucleotide sequence ID" value="NM_079071.3"/>
</dbReference>
<dbReference type="PDB" id="6TIS">
    <property type="method" value="X-ray"/>
    <property type="resolution" value="2.30 A"/>
    <property type="chains" value="B/D=1-447"/>
</dbReference>
<dbReference type="PDB" id="6TIU">
    <property type="method" value="X-ray"/>
    <property type="resolution" value="3.57 A"/>
    <property type="chains" value="B/D=1-447"/>
</dbReference>
<dbReference type="PDB" id="6TIY">
    <property type="method" value="X-ray"/>
    <property type="resolution" value="2.29 A"/>
    <property type="chains" value="B/D=1-447"/>
</dbReference>
<dbReference type="PDB" id="6TIZ">
    <property type="method" value="X-ray"/>
    <property type="resolution" value="2.20 A"/>
    <property type="chains" value="B/D=1-447"/>
</dbReference>
<dbReference type="PDB" id="7QUC">
    <property type="method" value="EM"/>
    <property type="resolution" value="3.20 A"/>
    <property type="chains" value="B=1-447"/>
</dbReference>
<dbReference type="PDB" id="7QUD">
    <property type="method" value="EM"/>
    <property type="resolution" value="3.47 A"/>
    <property type="chains" value="B=1-447"/>
</dbReference>
<dbReference type="PDB" id="7QUP">
    <property type="method" value="EM"/>
    <property type="resolution" value="3.80 A"/>
    <property type="chains" value="10B/10D/11B/11D/12B/12D/13B/13D/1B/1D/2B/2D/3B/3D/4B/4D/5B/5D/6B/6D/7B/7D/8B/8D/9B/9D=2-426"/>
</dbReference>
<dbReference type="PDB" id="7YSQ">
    <property type="method" value="EM"/>
    <property type="resolution" value="6.80 A"/>
    <property type="chains" value="B/G/H/I=1-447"/>
</dbReference>
<dbReference type="PDB" id="7YSR">
    <property type="method" value="EM"/>
    <property type="resolution" value="4.30 A"/>
    <property type="chains" value="B/D=1-447"/>
</dbReference>
<dbReference type="PDBsum" id="6TIS"/>
<dbReference type="PDBsum" id="6TIU"/>
<dbReference type="PDBsum" id="6TIY"/>
<dbReference type="PDBsum" id="6TIZ"/>
<dbReference type="PDBsum" id="7QUC"/>
<dbReference type="PDBsum" id="7QUD"/>
<dbReference type="PDBsum" id="7QUP"/>
<dbReference type="PDBsum" id="7YSQ"/>
<dbReference type="PDBsum" id="7YSR"/>
<dbReference type="EMDB" id="EMD-14147"/>
<dbReference type="EMDB" id="EMD-14148"/>
<dbReference type="EMDB" id="EMD-14150"/>
<dbReference type="EMDB" id="EMD-34080"/>
<dbReference type="EMDB" id="EMD-34081"/>
<dbReference type="SMR" id="Q24560"/>
<dbReference type="BioGRID" id="62900">
    <property type="interactions" value="93"/>
</dbReference>
<dbReference type="DIP" id="DIP-43956N"/>
<dbReference type="FunCoup" id="Q24560">
    <property type="interactions" value="861"/>
</dbReference>
<dbReference type="IntAct" id="Q24560">
    <property type="interactions" value="3"/>
</dbReference>
<dbReference type="MINT" id="Q24560"/>
<dbReference type="iPTMnet" id="Q24560"/>
<dbReference type="DNASU" id="37238"/>
<dbReference type="EnsemblMetazoa" id="FBtr0086536">
    <property type="protein sequence ID" value="FBpp0085720"/>
    <property type="gene ID" value="FBgn0284243"/>
</dbReference>
<dbReference type="GeneID" id="37238"/>
<dbReference type="KEGG" id="dme:Dmel_CG9277"/>
<dbReference type="AGR" id="FB:FBgn0284243"/>
<dbReference type="CTD" id="37238"/>
<dbReference type="FlyBase" id="FBgn0284243">
    <property type="gene designation" value="betaTub56D"/>
</dbReference>
<dbReference type="VEuPathDB" id="VectorBase:FBgn0284243"/>
<dbReference type="eggNOG" id="KOG1375">
    <property type="taxonomic scope" value="Eukaryota"/>
</dbReference>
<dbReference type="GeneTree" id="ENSGT00940000154394"/>
<dbReference type="HOGENOM" id="CLU_015718_1_1_1"/>
<dbReference type="InParanoid" id="Q24560"/>
<dbReference type="OrthoDB" id="1662883at2759"/>
<dbReference type="PhylomeDB" id="Q24560"/>
<dbReference type="Reactome" id="R-DME-3371497">
    <property type="pathway name" value="HSP90 chaperone cycle for steroid hormone receptors (SHR) in the presence of ligand"/>
</dbReference>
<dbReference type="Reactome" id="R-DME-6798695">
    <property type="pathway name" value="Neutrophil degranulation"/>
</dbReference>
<dbReference type="Reactome" id="R-DME-6807878">
    <property type="pathway name" value="COPI-mediated anterograde transport"/>
</dbReference>
<dbReference type="Reactome" id="R-DME-6811434">
    <property type="pathway name" value="COPI-dependent Golgi-to-ER retrograde traffic"/>
</dbReference>
<dbReference type="Reactome" id="R-DME-6811436">
    <property type="pathway name" value="COPI-independent Golgi-to-ER retrograde traffic"/>
</dbReference>
<dbReference type="Reactome" id="R-DME-983189">
    <property type="pathway name" value="Kinesins"/>
</dbReference>
<dbReference type="SignaLink" id="Q24560"/>
<dbReference type="ChiTaRS" id="betaTub56D">
    <property type="organism name" value="fly"/>
</dbReference>
<dbReference type="GenomeRNAi" id="37238"/>
<dbReference type="PRO" id="PR:Q24560"/>
<dbReference type="Proteomes" id="UP000000803">
    <property type="component" value="Chromosome 2R"/>
</dbReference>
<dbReference type="Bgee" id="FBgn0284243">
    <property type="expression patterns" value="Expressed in tendon cell (Drosophila) in body wall and 301 other cell types or tissues"/>
</dbReference>
<dbReference type="ExpressionAtlas" id="Q24560">
    <property type="expression patterns" value="baseline and differential"/>
</dbReference>
<dbReference type="GO" id="GO:0005737">
    <property type="term" value="C:cytoplasm"/>
    <property type="evidence" value="ECO:0000318"/>
    <property type="project" value="GO_Central"/>
</dbReference>
<dbReference type="GO" id="GO:0005874">
    <property type="term" value="C:microtubule"/>
    <property type="evidence" value="ECO:0000318"/>
    <property type="project" value="GO_Central"/>
</dbReference>
<dbReference type="GO" id="GO:0005525">
    <property type="term" value="F:GTP binding"/>
    <property type="evidence" value="ECO:0000318"/>
    <property type="project" value="GO_Central"/>
</dbReference>
<dbReference type="GO" id="GO:0003924">
    <property type="term" value="F:GTPase activity"/>
    <property type="evidence" value="ECO:0007669"/>
    <property type="project" value="InterPro"/>
</dbReference>
<dbReference type="GO" id="GO:0046872">
    <property type="term" value="F:metal ion binding"/>
    <property type="evidence" value="ECO:0007669"/>
    <property type="project" value="UniProtKB-KW"/>
</dbReference>
<dbReference type="GO" id="GO:0005200">
    <property type="term" value="F:structural constituent of cytoskeleton"/>
    <property type="evidence" value="ECO:0000318"/>
    <property type="project" value="GO_Central"/>
</dbReference>
<dbReference type="GO" id="GO:0000226">
    <property type="term" value="P:microtubule cytoskeleton organization"/>
    <property type="evidence" value="ECO:0000318"/>
    <property type="project" value="GO_Central"/>
</dbReference>
<dbReference type="GO" id="GO:0000278">
    <property type="term" value="P:mitotic cell cycle"/>
    <property type="evidence" value="ECO:0000318"/>
    <property type="project" value="GO_Central"/>
</dbReference>
<dbReference type="CDD" id="cd02187">
    <property type="entry name" value="beta_tubulin"/>
    <property type="match status" value="1"/>
</dbReference>
<dbReference type="FunFam" id="1.10.287.600:FF:000006">
    <property type="entry name" value="Tubulin beta chain"/>
    <property type="match status" value="1"/>
</dbReference>
<dbReference type="FunFam" id="3.30.1330.20:FF:000002">
    <property type="entry name" value="Tubulin beta chain"/>
    <property type="match status" value="1"/>
</dbReference>
<dbReference type="FunFam" id="3.40.50.1440:FF:000003">
    <property type="entry name" value="Tubulin beta chain"/>
    <property type="match status" value="1"/>
</dbReference>
<dbReference type="Gene3D" id="1.10.287.600">
    <property type="entry name" value="Helix hairpin bin"/>
    <property type="match status" value="1"/>
</dbReference>
<dbReference type="Gene3D" id="3.30.1330.20">
    <property type="entry name" value="Tubulin/FtsZ, C-terminal domain"/>
    <property type="match status" value="1"/>
</dbReference>
<dbReference type="Gene3D" id="3.40.50.1440">
    <property type="entry name" value="Tubulin/FtsZ, GTPase domain"/>
    <property type="match status" value="1"/>
</dbReference>
<dbReference type="InterPro" id="IPR013838">
    <property type="entry name" value="Beta-tubulin_BS"/>
</dbReference>
<dbReference type="InterPro" id="IPR002453">
    <property type="entry name" value="Beta_tubulin"/>
</dbReference>
<dbReference type="InterPro" id="IPR008280">
    <property type="entry name" value="Tub_FtsZ_C"/>
</dbReference>
<dbReference type="InterPro" id="IPR000217">
    <property type="entry name" value="Tubulin"/>
</dbReference>
<dbReference type="InterPro" id="IPR037103">
    <property type="entry name" value="Tubulin/FtsZ-like_C"/>
</dbReference>
<dbReference type="InterPro" id="IPR018316">
    <property type="entry name" value="Tubulin/FtsZ_2-layer-sand-dom"/>
</dbReference>
<dbReference type="InterPro" id="IPR036525">
    <property type="entry name" value="Tubulin/FtsZ_GTPase_sf"/>
</dbReference>
<dbReference type="InterPro" id="IPR023123">
    <property type="entry name" value="Tubulin_C"/>
</dbReference>
<dbReference type="InterPro" id="IPR017975">
    <property type="entry name" value="Tubulin_CS"/>
</dbReference>
<dbReference type="InterPro" id="IPR003008">
    <property type="entry name" value="Tubulin_FtsZ_GTPase"/>
</dbReference>
<dbReference type="PANTHER" id="PTHR11588">
    <property type="entry name" value="TUBULIN"/>
    <property type="match status" value="1"/>
</dbReference>
<dbReference type="Pfam" id="PF00091">
    <property type="entry name" value="Tubulin"/>
    <property type="match status" value="1"/>
</dbReference>
<dbReference type="Pfam" id="PF03953">
    <property type="entry name" value="Tubulin_C"/>
    <property type="match status" value="1"/>
</dbReference>
<dbReference type="PRINTS" id="PR01163">
    <property type="entry name" value="BETATUBULIN"/>
</dbReference>
<dbReference type="PRINTS" id="PR01161">
    <property type="entry name" value="TUBULIN"/>
</dbReference>
<dbReference type="SMART" id="SM00864">
    <property type="entry name" value="Tubulin"/>
    <property type="match status" value="1"/>
</dbReference>
<dbReference type="SMART" id="SM00865">
    <property type="entry name" value="Tubulin_C"/>
    <property type="match status" value="1"/>
</dbReference>
<dbReference type="SUPFAM" id="SSF55307">
    <property type="entry name" value="Tubulin C-terminal domain-like"/>
    <property type="match status" value="1"/>
</dbReference>
<dbReference type="SUPFAM" id="SSF52490">
    <property type="entry name" value="Tubulin nucleotide-binding domain-like"/>
    <property type="match status" value="1"/>
</dbReference>
<dbReference type="PROSITE" id="PS00227">
    <property type="entry name" value="TUBULIN"/>
    <property type="match status" value="1"/>
</dbReference>
<dbReference type="PROSITE" id="PS00228">
    <property type="entry name" value="TUBULIN_B_AUTOREG"/>
    <property type="match status" value="1"/>
</dbReference>